<gene>
    <name type="primary">Cdh20</name>
    <name type="synonym">Cad20</name>
</gene>
<organism>
    <name type="scientific">Rattus norvegicus</name>
    <name type="common">Rat</name>
    <dbReference type="NCBI Taxonomy" id="10116"/>
    <lineage>
        <taxon>Eukaryota</taxon>
        <taxon>Metazoa</taxon>
        <taxon>Chordata</taxon>
        <taxon>Craniata</taxon>
        <taxon>Vertebrata</taxon>
        <taxon>Euteleostomi</taxon>
        <taxon>Mammalia</taxon>
        <taxon>Eutheria</taxon>
        <taxon>Euarchontoglires</taxon>
        <taxon>Glires</taxon>
        <taxon>Rodentia</taxon>
        <taxon>Myomorpha</taxon>
        <taxon>Muroidea</taxon>
        <taxon>Muridae</taxon>
        <taxon>Murinae</taxon>
        <taxon>Rattus</taxon>
    </lineage>
</organism>
<keyword id="KW-0106">Calcium</keyword>
<keyword id="KW-0130">Cell adhesion</keyword>
<keyword id="KW-1003">Cell membrane</keyword>
<keyword id="KW-0165">Cleavage on pair of basic residues</keyword>
<keyword id="KW-0325">Glycoprotein</keyword>
<keyword id="KW-0472">Membrane</keyword>
<keyword id="KW-0479">Metal-binding</keyword>
<keyword id="KW-1185">Reference proteome</keyword>
<keyword id="KW-0677">Repeat</keyword>
<keyword id="KW-0732">Signal</keyword>
<keyword id="KW-0812">Transmembrane</keyword>
<keyword id="KW-1133">Transmembrane helix</keyword>
<comment type="function">
    <text evidence="1">Cadherins are calcium-dependent cell adhesion proteins. They preferentially interact with themselves in a homophilic manner in connecting cells; cadherins may thus contribute to the sorting of heterogeneous cell types (By similarity).</text>
</comment>
<comment type="subcellular location">
    <subcellularLocation>
        <location evidence="1">Cell membrane</location>
        <topology evidence="1">Single-pass type I membrane protein</topology>
    </subcellularLocation>
</comment>
<comment type="domain">
    <text evidence="1">Three calcium ions are usually bound at the interface of each cadherin domain and rigidify the connections, imparting a strong curvature to the full-length ectodomain.</text>
</comment>
<dbReference type="EMBL" id="AB121033">
    <property type="protein sequence ID" value="BAD90596.1"/>
    <property type="molecule type" value="mRNA"/>
</dbReference>
<dbReference type="RefSeq" id="NP_001012766.1">
    <property type="nucleotide sequence ID" value="NM_001012748.1"/>
</dbReference>
<dbReference type="SMR" id="Q5DWV1"/>
<dbReference type="FunCoup" id="Q5DWV1">
    <property type="interactions" value="542"/>
</dbReference>
<dbReference type="STRING" id="10116.ENSRNOP00000019907"/>
<dbReference type="GlyCosmos" id="Q5DWV1">
    <property type="glycosylation" value="4 sites, No reported glycans"/>
</dbReference>
<dbReference type="GlyGen" id="Q5DWV1">
    <property type="glycosylation" value="4 sites"/>
</dbReference>
<dbReference type="PhosphoSitePlus" id="Q5DWV1"/>
<dbReference type="PaxDb" id="10116-ENSRNOP00000019907"/>
<dbReference type="GeneID" id="363948"/>
<dbReference type="KEGG" id="rno:363948"/>
<dbReference type="UCSC" id="RGD:1305438">
    <property type="organism name" value="rat"/>
</dbReference>
<dbReference type="AGR" id="RGD:1305438"/>
<dbReference type="CTD" id="28316"/>
<dbReference type="RGD" id="1305438">
    <property type="gene designation" value="Cdh20"/>
</dbReference>
<dbReference type="eggNOG" id="KOG3594">
    <property type="taxonomic scope" value="Eukaryota"/>
</dbReference>
<dbReference type="InParanoid" id="Q5DWV1"/>
<dbReference type="PhylomeDB" id="Q5DWV1"/>
<dbReference type="PRO" id="PR:Q5DWV1"/>
<dbReference type="Proteomes" id="UP000002494">
    <property type="component" value="Unplaced"/>
</dbReference>
<dbReference type="GO" id="GO:0005912">
    <property type="term" value="C:adherens junction"/>
    <property type="evidence" value="ECO:0000318"/>
    <property type="project" value="GO_Central"/>
</dbReference>
<dbReference type="GO" id="GO:0016342">
    <property type="term" value="C:catenin complex"/>
    <property type="evidence" value="ECO:0000318"/>
    <property type="project" value="GO_Central"/>
</dbReference>
<dbReference type="GO" id="GO:0008013">
    <property type="term" value="F:beta-catenin binding"/>
    <property type="evidence" value="ECO:0000318"/>
    <property type="project" value="GO_Central"/>
</dbReference>
<dbReference type="GO" id="GO:0045296">
    <property type="term" value="F:cadherin binding"/>
    <property type="evidence" value="ECO:0000318"/>
    <property type="project" value="GO_Central"/>
</dbReference>
<dbReference type="GO" id="GO:0005509">
    <property type="term" value="F:calcium ion binding"/>
    <property type="evidence" value="ECO:0007669"/>
    <property type="project" value="InterPro"/>
</dbReference>
<dbReference type="GO" id="GO:0034332">
    <property type="term" value="P:adherens junction organization"/>
    <property type="evidence" value="ECO:0000318"/>
    <property type="project" value="GO_Central"/>
</dbReference>
<dbReference type="GO" id="GO:0016339">
    <property type="term" value="P:calcium-dependent cell-cell adhesion via plasma membrane cell adhesion molecules"/>
    <property type="evidence" value="ECO:0000318"/>
    <property type="project" value="GO_Central"/>
</dbReference>
<dbReference type="GO" id="GO:0016477">
    <property type="term" value="P:cell migration"/>
    <property type="evidence" value="ECO:0000318"/>
    <property type="project" value="GO_Central"/>
</dbReference>
<dbReference type="GO" id="GO:0000902">
    <property type="term" value="P:cell morphogenesis"/>
    <property type="evidence" value="ECO:0000318"/>
    <property type="project" value="GO_Central"/>
</dbReference>
<dbReference type="GO" id="GO:0044331">
    <property type="term" value="P:cell-cell adhesion mediated by cadherin"/>
    <property type="evidence" value="ECO:0000318"/>
    <property type="project" value="GO_Central"/>
</dbReference>
<dbReference type="GO" id="GO:0007043">
    <property type="term" value="P:cell-cell junction assembly"/>
    <property type="evidence" value="ECO:0000318"/>
    <property type="project" value="GO_Central"/>
</dbReference>
<dbReference type="GO" id="GO:0007156">
    <property type="term" value="P:homophilic cell adhesion via plasma membrane adhesion molecules"/>
    <property type="evidence" value="ECO:0007669"/>
    <property type="project" value="InterPro"/>
</dbReference>
<dbReference type="CDD" id="cd11304">
    <property type="entry name" value="Cadherin_repeat"/>
    <property type="match status" value="5"/>
</dbReference>
<dbReference type="FunFam" id="4.10.900.10:FF:000001">
    <property type="entry name" value="Cadherin 2"/>
    <property type="match status" value="1"/>
</dbReference>
<dbReference type="FunFam" id="2.60.40.60:FF:000008">
    <property type="entry name" value="Cadherin 24"/>
    <property type="match status" value="1"/>
</dbReference>
<dbReference type="FunFam" id="2.60.40.60:FF:000009">
    <property type="entry name" value="Cadherin 24"/>
    <property type="match status" value="1"/>
</dbReference>
<dbReference type="FunFam" id="2.60.40.60:FF:000012">
    <property type="entry name" value="Cadherin 24"/>
    <property type="match status" value="1"/>
</dbReference>
<dbReference type="FunFam" id="2.60.40.60:FF:000017">
    <property type="entry name" value="Cadherin 24"/>
    <property type="match status" value="1"/>
</dbReference>
<dbReference type="FunFam" id="2.60.40.60:FF:000014">
    <property type="entry name" value="Cadherin 8"/>
    <property type="match status" value="1"/>
</dbReference>
<dbReference type="Gene3D" id="2.60.40.60">
    <property type="entry name" value="Cadherins"/>
    <property type="match status" value="5"/>
</dbReference>
<dbReference type="Gene3D" id="4.10.900.10">
    <property type="entry name" value="TCF3-CBD (Catenin binding domain)"/>
    <property type="match status" value="1"/>
</dbReference>
<dbReference type="InterPro" id="IPR039808">
    <property type="entry name" value="Cadherin"/>
</dbReference>
<dbReference type="InterPro" id="IPR002126">
    <property type="entry name" value="Cadherin-like_dom"/>
</dbReference>
<dbReference type="InterPro" id="IPR015919">
    <property type="entry name" value="Cadherin-like_sf"/>
</dbReference>
<dbReference type="InterPro" id="IPR020894">
    <property type="entry name" value="Cadherin_CS"/>
</dbReference>
<dbReference type="InterPro" id="IPR000233">
    <property type="entry name" value="Cadherin_Y-type_LIR"/>
</dbReference>
<dbReference type="InterPro" id="IPR027397">
    <property type="entry name" value="Catenin-bd_sf"/>
</dbReference>
<dbReference type="PANTHER" id="PTHR24027:SF84">
    <property type="entry name" value="CADHERIN-20"/>
    <property type="match status" value="1"/>
</dbReference>
<dbReference type="PANTHER" id="PTHR24027">
    <property type="entry name" value="CADHERIN-23"/>
    <property type="match status" value="1"/>
</dbReference>
<dbReference type="Pfam" id="PF01049">
    <property type="entry name" value="CADH_Y-type_LIR"/>
    <property type="match status" value="1"/>
</dbReference>
<dbReference type="Pfam" id="PF00028">
    <property type="entry name" value="Cadherin"/>
    <property type="match status" value="5"/>
</dbReference>
<dbReference type="PRINTS" id="PR00205">
    <property type="entry name" value="CADHERIN"/>
</dbReference>
<dbReference type="SMART" id="SM00112">
    <property type="entry name" value="CA"/>
    <property type="match status" value="5"/>
</dbReference>
<dbReference type="SUPFAM" id="SSF49313">
    <property type="entry name" value="Cadherin-like"/>
    <property type="match status" value="5"/>
</dbReference>
<dbReference type="PROSITE" id="PS00232">
    <property type="entry name" value="CADHERIN_1"/>
    <property type="match status" value="3"/>
</dbReference>
<dbReference type="PROSITE" id="PS50268">
    <property type="entry name" value="CADHERIN_2"/>
    <property type="match status" value="5"/>
</dbReference>
<proteinExistence type="evidence at transcript level"/>
<protein>
    <recommendedName>
        <fullName>Cadherin-20</fullName>
    </recommendedName>
</protein>
<evidence type="ECO:0000250" key="1"/>
<evidence type="ECO:0000255" key="2"/>
<evidence type="ECO:0000255" key="3">
    <source>
        <dbReference type="PROSITE-ProRule" id="PRU00043"/>
    </source>
</evidence>
<accession>Q5DWV1</accession>
<reference key="1">
    <citation type="submission" date="2003-09" db="EMBL/GenBank/DDBJ databases">
        <title>Expressions of rat cadherin-7 and 20 in the developing nervous system.</title>
        <authorList>
            <person name="Takahashi M."/>
            <person name="Osumi N."/>
        </authorList>
    </citation>
    <scope>NUCLEOTIDE SEQUENCE [MRNA]</scope>
    <source>
        <strain>Sprague-Dawley</strain>
    </source>
</reference>
<feature type="signal peptide" evidence="2">
    <location>
        <begin position="1"/>
        <end position="34"/>
    </location>
</feature>
<feature type="propeptide" id="PRO_0000320098" evidence="2">
    <location>
        <begin position="35"/>
        <end position="59"/>
    </location>
</feature>
<feature type="chain" id="PRO_0000320099" description="Cadherin-20">
    <location>
        <begin position="60"/>
        <end position="801"/>
    </location>
</feature>
<feature type="topological domain" description="Extracellular" evidence="2">
    <location>
        <begin position="60"/>
        <end position="619"/>
    </location>
</feature>
<feature type="transmembrane region" description="Helical" evidence="2">
    <location>
        <begin position="620"/>
        <end position="640"/>
    </location>
</feature>
<feature type="topological domain" description="Cytoplasmic" evidence="2">
    <location>
        <begin position="641"/>
        <end position="801"/>
    </location>
</feature>
<feature type="domain" description="Cadherin 1" evidence="3">
    <location>
        <begin position="61"/>
        <end position="165"/>
    </location>
</feature>
<feature type="domain" description="Cadherin 2" evidence="3">
    <location>
        <begin position="166"/>
        <end position="274"/>
    </location>
</feature>
<feature type="domain" description="Cadherin 3" evidence="3">
    <location>
        <begin position="275"/>
        <end position="389"/>
    </location>
</feature>
<feature type="domain" description="Cadherin 4" evidence="3">
    <location>
        <begin position="390"/>
        <end position="494"/>
    </location>
</feature>
<feature type="domain" description="Cadherin 5" evidence="3">
    <location>
        <begin position="494"/>
        <end position="610"/>
    </location>
</feature>
<feature type="glycosylation site" description="N-linked (GlcNAc...) asparagine" evidence="2">
    <location>
        <position position="261"/>
    </location>
</feature>
<feature type="glycosylation site" description="N-linked (GlcNAc...) asparagine" evidence="2">
    <location>
        <position position="420"/>
    </location>
</feature>
<feature type="glycosylation site" description="N-linked (GlcNAc...) asparagine" evidence="2">
    <location>
        <position position="461"/>
    </location>
</feature>
<feature type="glycosylation site" description="N-linked (GlcNAc...) asparagine" evidence="2">
    <location>
        <position position="542"/>
    </location>
</feature>
<sequence length="801" mass="89057">MWTTGRMSNAKSWLGLGTSLYFWALMDLATTVLSSTPMPEVELDTLFSGKPQSHQRSRRSWVWNQFFVLEEYTGTDPLYVGKLHSDMDRGDGSIKYILSGEGAGIVFTIDDTTGDIHAIQRLDREERAQYTLRAQALDRRTGRPMEPESEFIIKIQDINDNEPKFLDGPYVATVPEMSPVGTSVIQVTATDADDPTYGNSARVVYSILQGQPYFSVDSKTGIIRTALMNMDREAKEYYEVIIQAKDMGGQLGGLAGTTTVNITLSDVNDNPPRFPQKHYQMSVLESAPVSSTVGRVFAKDLDEGINAEMKYTIVDGDGADAFDINTDPNFQVGIITVKKPLSFESKKSYTLKVEGSNPHVEMRFLNLGPFQDTTTVHIIVEDVDEPPVFEPRFYFVEVPEDVTIGTTIQIISAKDPDMTNNSIRYSIDRGSDPGRFFYVDITTGALMTARPLDREEFSWHNITVLAMEMNNPSQVGSVAATIKVLDVNDNAPEFPRFYEAFICENAKAGQLIQTVSAVDQDDPHNGQHFYYSLAPEAANNPNFTVRDNQDNTARILTRRSGFRQQEQSVFYLPILIADSGQPVLSSTGTLTIQVCSCSDDGHVMSCSPEAYMLPVSLSRGALIAILACVFVLLVLVLLILSMRRHRKQPYIIDDDENIHENIVRYDDEGGGEEDTEAFDIAAMWNPREAQAGAAPKTRQDMLPEIESLSRYVPQTCAVSSTVHSYVLAKLYEADMDLWAPPFDSLQTYMFEGDGSVAGSLSSLQSATSDSEQSFDFLTDWGPRFRKLAELYGASEGPSPLW</sequence>
<name>CAD20_RAT</name>